<dbReference type="EC" id="2.3.1.234" evidence="1"/>
<dbReference type="EMBL" id="U00089">
    <property type="protein sequence ID" value="AAB95743.1"/>
    <property type="molecule type" value="Genomic_DNA"/>
</dbReference>
<dbReference type="PIR" id="S73421">
    <property type="entry name" value="S73421"/>
</dbReference>
<dbReference type="RefSeq" id="NP_109747.1">
    <property type="nucleotide sequence ID" value="NC_000912.1"/>
</dbReference>
<dbReference type="RefSeq" id="WP_010874416.1">
    <property type="nucleotide sequence ID" value="NZ_OU342337.1"/>
</dbReference>
<dbReference type="SMR" id="P75055"/>
<dbReference type="IntAct" id="P75055">
    <property type="interactions" value="2"/>
</dbReference>
<dbReference type="STRING" id="272634.MPN_059"/>
<dbReference type="EnsemblBacteria" id="AAB95743">
    <property type="protein sequence ID" value="AAB95743"/>
    <property type="gene ID" value="MPN_059"/>
</dbReference>
<dbReference type="GeneID" id="66609300"/>
<dbReference type="KEGG" id="mpn:MPN_059"/>
<dbReference type="PATRIC" id="fig|272634.6.peg.59"/>
<dbReference type="HOGENOM" id="CLU_023208_0_1_14"/>
<dbReference type="OrthoDB" id="9806197at2"/>
<dbReference type="BioCyc" id="MPNE272634:G1GJ3-94-MONOMER"/>
<dbReference type="Proteomes" id="UP000000808">
    <property type="component" value="Chromosome"/>
</dbReference>
<dbReference type="GO" id="GO:0005737">
    <property type="term" value="C:cytoplasm"/>
    <property type="evidence" value="ECO:0007669"/>
    <property type="project" value="UniProtKB-SubCell"/>
</dbReference>
<dbReference type="GO" id="GO:0005506">
    <property type="term" value="F:iron ion binding"/>
    <property type="evidence" value="ECO:0007669"/>
    <property type="project" value="UniProtKB-UniRule"/>
</dbReference>
<dbReference type="GO" id="GO:0061711">
    <property type="term" value="F:N(6)-L-threonylcarbamoyladenine synthase activity"/>
    <property type="evidence" value="ECO:0007669"/>
    <property type="project" value="UniProtKB-EC"/>
</dbReference>
<dbReference type="GO" id="GO:0002949">
    <property type="term" value="P:tRNA threonylcarbamoyladenosine modification"/>
    <property type="evidence" value="ECO:0007669"/>
    <property type="project" value="UniProtKB-UniRule"/>
</dbReference>
<dbReference type="Gene3D" id="3.30.420.40">
    <property type="match status" value="2"/>
</dbReference>
<dbReference type="HAMAP" id="MF_01445">
    <property type="entry name" value="TsaD"/>
    <property type="match status" value="1"/>
</dbReference>
<dbReference type="InterPro" id="IPR043129">
    <property type="entry name" value="ATPase_NBD"/>
</dbReference>
<dbReference type="InterPro" id="IPR000905">
    <property type="entry name" value="Gcp-like_dom"/>
</dbReference>
<dbReference type="InterPro" id="IPR017861">
    <property type="entry name" value="KAE1/TsaD"/>
</dbReference>
<dbReference type="InterPro" id="IPR017860">
    <property type="entry name" value="Peptidase_M22_CS"/>
</dbReference>
<dbReference type="InterPro" id="IPR022450">
    <property type="entry name" value="TsaD"/>
</dbReference>
<dbReference type="NCBIfam" id="TIGR00329">
    <property type="entry name" value="gcp_kae1"/>
    <property type="match status" value="1"/>
</dbReference>
<dbReference type="NCBIfam" id="TIGR03723">
    <property type="entry name" value="T6A_TsaD_YgjD"/>
    <property type="match status" value="1"/>
</dbReference>
<dbReference type="PANTHER" id="PTHR11735">
    <property type="entry name" value="TRNA N6-ADENOSINE THREONYLCARBAMOYLTRANSFERASE"/>
    <property type="match status" value="1"/>
</dbReference>
<dbReference type="PANTHER" id="PTHR11735:SF6">
    <property type="entry name" value="TRNA N6-ADENOSINE THREONYLCARBAMOYLTRANSFERASE, MITOCHONDRIAL"/>
    <property type="match status" value="1"/>
</dbReference>
<dbReference type="Pfam" id="PF00814">
    <property type="entry name" value="TsaD"/>
    <property type="match status" value="1"/>
</dbReference>
<dbReference type="PRINTS" id="PR00789">
    <property type="entry name" value="OSIALOPTASE"/>
</dbReference>
<dbReference type="SUPFAM" id="SSF53067">
    <property type="entry name" value="Actin-like ATPase domain"/>
    <property type="match status" value="1"/>
</dbReference>
<dbReference type="PROSITE" id="PS01016">
    <property type="entry name" value="GLYCOPROTEASE"/>
    <property type="match status" value="1"/>
</dbReference>
<organism>
    <name type="scientific">Mycoplasma pneumoniae (strain ATCC 29342 / M129 / Subtype 1)</name>
    <name type="common">Mycoplasmoides pneumoniae</name>
    <dbReference type="NCBI Taxonomy" id="272634"/>
    <lineage>
        <taxon>Bacteria</taxon>
        <taxon>Bacillati</taxon>
        <taxon>Mycoplasmatota</taxon>
        <taxon>Mycoplasmoidales</taxon>
        <taxon>Mycoplasmoidaceae</taxon>
        <taxon>Mycoplasmoides</taxon>
    </lineage>
</organism>
<protein>
    <recommendedName>
        <fullName evidence="1">tRNA N6-adenosine threonylcarbamoyltransferase</fullName>
        <ecNumber evidence="1">2.3.1.234</ecNumber>
    </recommendedName>
    <alternativeName>
        <fullName evidence="1">N6-L-threonylcarbamoyladenine synthase</fullName>
        <shortName evidence="1">t(6)A synthase</shortName>
    </alternativeName>
    <alternativeName>
        <fullName evidence="1">t(6)A37 threonylcarbamoyladenosine biosynthesis protein TsaD</fullName>
    </alternativeName>
    <alternativeName>
        <fullName evidence="1">tRNA threonylcarbamoyladenosine biosynthesis protein TsaD</fullName>
    </alternativeName>
</protein>
<proteinExistence type="inferred from homology"/>
<comment type="function">
    <text evidence="1">Required for the formation of a threonylcarbamoyl group on adenosine at position 37 (t(6)A37) in tRNAs that read codons beginning with adenine. Is involved in the transfer of the threonylcarbamoyl moiety of threonylcarbamoyl-AMP (TC-AMP) to the N6 group of A37, together with TsaE and TsaB. TsaD likely plays a direct catalytic role in this reaction.</text>
</comment>
<comment type="catalytic activity">
    <reaction evidence="1">
        <text>L-threonylcarbamoyladenylate + adenosine(37) in tRNA = N(6)-L-threonylcarbamoyladenosine(37) in tRNA + AMP + H(+)</text>
        <dbReference type="Rhea" id="RHEA:37059"/>
        <dbReference type="Rhea" id="RHEA-COMP:10162"/>
        <dbReference type="Rhea" id="RHEA-COMP:10163"/>
        <dbReference type="ChEBI" id="CHEBI:15378"/>
        <dbReference type="ChEBI" id="CHEBI:73682"/>
        <dbReference type="ChEBI" id="CHEBI:74411"/>
        <dbReference type="ChEBI" id="CHEBI:74418"/>
        <dbReference type="ChEBI" id="CHEBI:456215"/>
        <dbReference type="EC" id="2.3.1.234"/>
    </reaction>
</comment>
<comment type="cofactor">
    <cofactor evidence="1">
        <name>Fe(2+)</name>
        <dbReference type="ChEBI" id="CHEBI:29033"/>
    </cofactor>
    <text evidence="1">Binds 1 Fe(2+) ion per subunit.</text>
</comment>
<comment type="subcellular location">
    <subcellularLocation>
        <location evidence="1">Cytoplasm</location>
    </subcellularLocation>
</comment>
<comment type="similarity">
    <text evidence="1">Belongs to the KAE1 / TsaD family.</text>
</comment>
<sequence>MEQPLCILGIETTCDDTSIGVITESKVQAHIVLSSAKLHAQTGGVVPEVAARSHEQNLLKALQQSGVVLEQITHIAYAANPGLPGCLHVGATFARSLSFLLDKPLLPINHLYAHIFSALIDQDINQLKLPALGLVVSGGHTAIYLIKSLFDLELIAETSDDAIGEVYDKVGRAMGFPYPAGPQLDSLFQPELVKSHYFFRPSTKWTKFSYSGLKSQCFTKIKQLRERKGFNPQTHDWNEFASNFQATIIDHYINHVKDAIQQHQPQMLLLGGGVSANKYLREQVTQLQLPYLIAPLKYTSDNGAMIGFYANLLINGKNN</sequence>
<name>TSAD_MYCPN</name>
<feature type="chain" id="PRO_0000096968" description="tRNA N6-adenosine threonylcarbamoyltransferase">
    <location>
        <begin position="1"/>
        <end position="319"/>
    </location>
</feature>
<feature type="binding site" evidence="1">
    <location>
        <position position="110"/>
    </location>
    <ligand>
        <name>Fe cation</name>
        <dbReference type="ChEBI" id="CHEBI:24875"/>
    </ligand>
</feature>
<feature type="binding site" evidence="1">
    <location>
        <position position="114"/>
    </location>
    <ligand>
        <name>Fe cation</name>
        <dbReference type="ChEBI" id="CHEBI:24875"/>
    </ligand>
</feature>
<feature type="binding site" evidence="1">
    <location>
        <begin position="135"/>
        <end position="139"/>
    </location>
    <ligand>
        <name>substrate</name>
    </ligand>
</feature>
<feature type="binding site" evidence="1">
    <location>
        <position position="168"/>
    </location>
    <ligand>
        <name>substrate</name>
    </ligand>
</feature>
<feature type="binding site" evidence="1">
    <location>
        <position position="181"/>
    </location>
    <ligand>
        <name>substrate</name>
    </ligand>
</feature>
<feature type="binding site" evidence="1">
    <location>
        <position position="185"/>
    </location>
    <ligand>
        <name>substrate</name>
    </ligand>
</feature>
<feature type="binding site" evidence="1">
    <location>
        <position position="277"/>
    </location>
    <ligand>
        <name>substrate</name>
    </ligand>
</feature>
<feature type="binding site" evidence="1">
    <location>
        <position position="301"/>
    </location>
    <ligand>
        <name>Fe cation</name>
        <dbReference type="ChEBI" id="CHEBI:24875"/>
    </ligand>
</feature>
<gene>
    <name evidence="1" type="primary">tsaD</name>
    <name type="synonym">gcp</name>
    <name type="ordered locus">MPN_059</name>
    <name type="ORF">MP095</name>
</gene>
<keyword id="KW-0012">Acyltransferase</keyword>
<keyword id="KW-0963">Cytoplasm</keyword>
<keyword id="KW-0408">Iron</keyword>
<keyword id="KW-0479">Metal-binding</keyword>
<keyword id="KW-1185">Reference proteome</keyword>
<keyword id="KW-0808">Transferase</keyword>
<keyword id="KW-0819">tRNA processing</keyword>
<evidence type="ECO:0000255" key="1">
    <source>
        <dbReference type="HAMAP-Rule" id="MF_01445"/>
    </source>
</evidence>
<accession>P75055</accession>
<reference key="1">
    <citation type="journal article" date="1996" name="Nucleic Acids Res.">
        <title>Complete sequence analysis of the genome of the bacterium Mycoplasma pneumoniae.</title>
        <authorList>
            <person name="Himmelreich R."/>
            <person name="Hilbert H."/>
            <person name="Plagens H."/>
            <person name="Pirkl E."/>
            <person name="Li B.-C."/>
            <person name="Herrmann R."/>
        </authorList>
    </citation>
    <scope>NUCLEOTIDE SEQUENCE [LARGE SCALE GENOMIC DNA]</scope>
    <source>
        <strain>ATCC 29342 / M129 / Subtype 1</strain>
    </source>
</reference>